<gene>
    <name evidence="1" type="primary">atpH</name>
    <name type="ordered locus">Abu_1598</name>
</gene>
<protein>
    <recommendedName>
        <fullName evidence="1">ATP synthase subunit delta</fullName>
    </recommendedName>
    <alternativeName>
        <fullName evidence="1">ATP synthase F(1) sector subunit delta</fullName>
    </alternativeName>
    <alternativeName>
        <fullName evidence="1">F-type ATPase subunit delta</fullName>
        <shortName evidence="1">F-ATPase subunit delta</shortName>
    </alternativeName>
</protein>
<organism>
    <name type="scientific">Aliarcobacter butzleri (strain RM4018)</name>
    <name type="common">Arcobacter butzleri</name>
    <dbReference type="NCBI Taxonomy" id="367737"/>
    <lineage>
        <taxon>Bacteria</taxon>
        <taxon>Pseudomonadati</taxon>
        <taxon>Campylobacterota</taxon>
        <taxon>Epsilonproteobacteria</taxon>
        <taxon>Campylobacterales</taxon>
        <taxon>Arcobacteraceae</taxon>
        <taxon>Aliarcobacter</taxon>
    </lineage>
</organism>
<name>ATPD_ALIB4</name>
<sequence>MKDLVAKRYVKALIDGRNSESINTISNKLNQVASAFADERFNSIISSPEISDKSKVDLIISFVDGTDNSLNNFIKLLGEKRRLDLLPFIAKDLNIQLAKMNNNYIGVVYTNQELSSDYISSIEKQFSKKFDVKLSLSQNVCDYDGIKVDIDGLGVEISFSKDRLKSQLIDHILKAV</sequence>
<keyword id="KW-0066">ATP synthesis</keyword>
<keyword id="KW-0997">Cell inner membrane</keyword>
<keyword id="KW-1003">Cell membrane</keyword>
<keyword id="KW-0139">CF(1)</keyword>
<keyword id="KW-0375">Hydrogen ion transport</keyword>
<keyword id="KW-0406">Ion transport</keyword>
<keyword id="KW-0472">Membrane</keyword>
<keyword id="KW-1185">Reference proteome</keyword>
<keyword id="KW-0813">Transport</keyword>
<evidence type="ECO:0000255" key="1">
    <source>
        <dbReference type="HAMAP-Rule" id="MF_01416"/>
    </source>
</evidence>
<proteinExistence type="inferred from homology"/>
<reference key="1">
    <citation type="journal article" date="2007" name="PLoS ONE">
        <title>The complete genome sequence and analysis of the Epsilonproteobacterium Arcobacter butzleri.</title>
        <authorList>
            <person name="Miller W.G."/>
            <person name="Parker C.T."/>
            <person name="Rubenfield M."/>
            <person name="Mendz G.L."/>
            <person name="Woesten M.M.S.M."/>
            <person name="Ussery D.W."/>
            <person name="Stolz J.F."/>
            <person name="Binnewies T.T."/>
            <person name="Hallin P.F."/>
            <person name="Wang G."/>
            <person name="Malek J.A."/>
            <person name="Rogosin A."/>
            <person name="Stanker L.H."/>
            <person name="Mandrell R.E."/>
        </authorList>
    </citation>
    <scope>NUCLEOTIDE SEQUENCE [LARGE SCALE GENOMIC DNA]</scope>
    <source>
        <strain>RM4018</strain>
    </source>
</reference>
<comment type="function">
    <text evidence="1">F(1)F(0) ATP synthase produces ATP from ADP in the presence of a proton or sodium gradient. F-type ATPases consist of two structural domains, F(1) containing the extramembraneous catalytic core and F(0) containing the membrane proton channel, linked together by a central stalk and a peripheral stalk. During catalysis, ATP synthesis in the catalytic domain of F(1) is coupled via a rotary mechanism of the central stalk subunits to proton translocation.</text>
</comment>
<comment type="function">
    <text evidence="1">This protein is part of the stalk that links CF(0) to CF(1). It either transmits conformational changes from CF(0) to CF(1) or is implicated in proton conduction.</text>
</comment>
<comment type="subunit">
    <text evidence="1">F-type ATPases have 2 components, F(1) - the catalytic core - and F(0) - the membrane proton channel. F(1) has five subunits: alpha(3), beta(3), gamma(1), delta(1), epsilon(1). F(0) has three main subunits: a(1), b(2) and c(10-14). The alpha and beta chains form an alternating ring which encloses part of the gamma chain. F(1) is attached to F(0) by a central stalk formed by the gamma and epsilon chains, while a peripheral stalk is formed by the delta and b chains.</text>
</comment>
<comment type="subcellular location">
    <subcellularLocation>
        <location evidence="1">Cell inner membrane</location>
        <topology evidence="1">Peripheral membrane protein</topology>
    </subcellularLocation>
</comment>
<comment type="similarity">
    <text evidence="1">Belongs to the ATPase delta chain family.</text>
</comment>
<dbReference type="EMBL" id="CP000361">
    <property type="protein sequence ID" value="ABV67846.1"/>
    <property type="molecule type" value="Genomic_DNA"/>
</dbReference>
<dbReference type="RefSeq" id="WP_004509830.1">
    <property type="nucleotide sequence ID" value="NC_009850.1"/>
</dbReference>
<dbReference type="SMR" id="A8EV73"/>
<dbReference type="STRING" id="367737.Abu_1598"/>
<dbReference type="GeneID" id="24304238"/>
<dbReference type="KEGG" id="abu:Abu_1598"/>
<dbReference type="eggNOG" id="COG0712">
    <property type="taxonomic scope" value="Bacteria"/>
</dbReference>
<dbReference type="HOGENOM" id="CLU_085114_3_1_7"/>
<dbReference type="Proteomes" id="UP000001136">
    <property type="component" value="Chromosome"/>
</dbReference>
<dbReference type="GO" id="GO:0005886">
    <property type="term" value="C:plasma membrane"/>
    <property type="evidence" value="ECO:0007669"/>
    <property type="project" value="UniProtKB-SubCell"/>
</dbReference>
<dbReference type="GO" id="GO:0045259">
    <property type="term" value="C:proton-transporting ATP synthase complex"/>
    <property type="evidence" value="ECO:0007669"/>
    <property type="project" value="UniProtKB-KW"/>
</dbReference>
<dbReference type="GO" id="GO:0046933">
    <property type="term" value="F:proton-transporting ATP synthase activity, rotational mechanism"/>
    <property type="evidence" value="ECO:0007669"/>
    <property type="project" value="UniProtKB-UniRule"/>
</dbReference>
<dbReference type="Gene3D" id="1.10.520.20">
    <property type="entry name" value="N-terminal domain of the delta subunit of the F1F0-ATP synthase"/>
    <property type="match status" value="1"/>
</dbReference>
<dbReference type="HAMAP" id="MF_01416">
    <property type="entry name" value="ATP_synth_delta_bact"/>
    <property type="match status" value="1"/>
</dbReference>
<dbReference type="InterPro" id="IPR026015">
    <property type="entry name" value="ATP_synth_OSCP/delta_N_sf"/>
</dbReference>
<dbReference type="InterPro" id="IPR000711">
    <property type="entry name" value="ATPase_OSCP/dsu"/>
</dbReference>
<dbReference type="NCBIfam" id="TIGR01145">
    <property type="entry name" value="ATP_synt_delta"/>
    <property type="match status" value="1"/>
</dbReference>
<dbReference type="NCBIfam" id="NF006291">
    <property type="entry name" value="PRK08474.1"/>
    <property type="match status" value="1"/>
</dbReference>
<dbReference type="Pfam" id="PF00213">
    <property type="entry name" value="OSCP"/>
    <property type="match status" value="1"/>
</dbReference>
<dbReference type="SUPFAM" id="SSF47928">
    <property type="entry name" value="N-terminal domain of the delta subunit of the F1F0-ATP synthase"/>
    <property type="match status" value="1"/>
</dbReference>
<accession>A8EV73</accession>
<feature type="chain" id="PRO_0000382056" description="ATP synthase subunit delta">
    <location>
        <begin position="1"/>
        <end position="176"/>
    </location>
</feature>